<proteinExistence type="evidence at protein level"/>
<reference key="1">
    <citation type="journal article" date="2007" name="Toxicon">
        <title>Venomic analyses of Scolopendra viridicornis nigra and Scolopendra angulata (Centipede, Scolopendromorpha): shedding light on venoms from a neglected group.</title>
        <authorList>
            <person name="Rates B."/>
            <person name="Bemquerer M.P."/>
            <person name="Richardson M."/>
            <person name="Borges M.H."/>
            <person name="Morales R.A.V."/>
            <person name="De Lima M.E."/>
            <person name="Pimenta A.M.C."/>
        </authorList>
    </citation>
    <scope>PROTEIN SEQUENCE</scope>
    <scope>MASS SPECTROMETRY</scope>
    <scope>SUBCELLULAR LOCATION</scope>
    <source>
        <tissue>Venom</tissue>
    </source>
</reference>
<dbReference type="GO" id="GO:0005576">
    <property type="term" value="C:extracellular region"/>
    <property type="evidence" value="ECO:0007669"/>
    <property type="project" value="UniProtKB-SubCell"/>
</dbReference>
<dbReference type="GO" id="GO:0090729">
    <property type="term" value="F:toxin activity"/>
    <property type="evidence" value="ECO:0007669"/>
    <property type="project" value="UniProtKB-KW"/>
</dbReference>
<keyword id="KW-0903">Direct protein sequencing</keyword>
<keyword id="KW-1015">Disulfide bond</keyword>
<keyword id="KW-0528">Neurotoxin</keyword>
<keyword id="KW-0964">Secreted</keyword>
<keyword id="KW-0800">Toxin</keyword>
<protein>
    <recommendedName>
        <fullName evidence="2">Scolopendra 20566.01 Da toxin</fullName>
    </recommendedName>
    <alternativeName>
        <fullName evidence="3">Cysteine-rich venom protein</fullName>
        <shortName evidence="3">CRVP</shortName>
    </alternativeName>
</protein>
<organism>
    <name type="scientific">Scolopendra angulata</name>
    <name type="common">Barbados giant red centipede</name>
    <dbReference type="NCBI Taxonomy" id="486498"/>
    <lineage>
        <taxon>Eukaryota</taxon>
        <taxon>Metazoa</taxon>
        <taxon>Ecdysozoa</taxon>
        <taxon>Arthropoda</taxon>
        <taxon>Myriapoda</taxon>
        <taxon>Chilopoda</taxon>
        <taxon>Pleurostigmophora</taxon>
        <taxon>Scolopendromorpha</taxon>
        <taxon>Scolopendridae</taxon>
        <taxon>Scolopendra</taxon>
    </lineage>
</organism>
<evidence type="ECO:0000269" key="1">
    <source>
    </source>
</evidence>
<evidence type="ECO:0000303" key="2">
    <source>
    </source>
</evidence>
<evidence type="ECO:0000305" key="3"/>
<evidence type="ECO:0000305" key="4">
    <source>
    </source>
</evidence>
<sequence length="31" mass="3352">CKMSEQGLNAQMKAQIVDLHNXARQGVANGQ</sequence>
<comment type="subcellular location">
    <subcellularLocation>
        <location evidence="1">Secreted</location>
    </subcellularLocation>
</comment>
<comment type="tissue specificity">
    <text evidence="4">Expressed by the venom gland.</text>
</comment>
<comment type="PTM">
    <text evidence="3">Contains 3 disulfide bonds.</text>
</comment>
<comment type="mass spectrometry" mass="20566.01" method="Electrospray" evidence="1"/>
<comment type="miscellaneous">
    <text evidence="4">Shows similarity with the venom allergen 5 from wasps. This similarity may explain why patients with allergies to centipede venom also display allergic reaction to wasp, honey bee and/or yellow jacket venom.</text>
</comment>
<comment type="similarity">
    <text evidence="3">Belongs to the CRISP family. Venom allergen 5-like subfamily.</text>
</comment>
<feature type="chain" id="PRO_0000352871" description="Scolopendra 20566.01 Da toxin">
    <location>
        <begin position="1"/>
        <end position="31" status="greater than"/>
    </location>
</feature>
<feature type="unsure residue" evidence="3">
    <location>
        <position position="1"/>
    </location>
</feature>
<feature type="non-terminal residue">
    <location>
        <position position="31"/>
    </location>
</feature>
<name>VA5B_SCOAN</name>
<accession>P0C8D5</accession>